<proteinExistence type="inferred from homology"/>
<name>PDXY_SHIDS</name>
<feature type="chain" id="PRO_0000269831" description="Pyridoxal kinase PdxY">
    <location>
        <begin position="1"/>
        <end position="287"/>
    </location>
</feature>
<feature type="binding site" evidence="1">
    <location>
        <position position="10"/>
    </location>
    <ligand>
        <name>substrate</name>
    </ligand>
</feature>
<feature type="binding site" evidence="1">
    <location>
        <begin position="45"/>
        <end position="46"/>
    </location>
    <ligand>
        <name>substrate</name>
    </ligand>
</feature>
<feature type="binding site" evidence="1">
    <location>
        <position position="112"/>
    </location>
    <ligand>
        <name>ATP</name>
        <dbReference type="ChEBI" id="CHEBI:30616"/>
    </ligand>
</feature>
<feature type="binding site" evidence="1">
    <location>
        <position position="144"/>
    </location>
    <ligand>
        <name>ATP</name>
        <dbReference type="ChEBI" id="CHEBI:30616"/>
    </ligand>
</feature>
<feature type="binding site" evidence="1">
    <location>
        <position position="149"/>
    </location>
    <ligand>
        <name>ATP</name>
        <dbReference type="ChEBI" id="CHEBI:30616"/>
    </ligand>
</feature>
<feature type="binding site" evidence="1">
    <location>
        <position position="182"/>
    </location>
    <ligand>
        <name>ATP</name>
        <dbReference type="ChEBI" id="CHEBI:30616"/>
    </ligand>
</feature>
<feature type="binding site" evidence="1">
    <location>
        <begin position="209"/>
        <end position="212"/>
    </location>
    <ligand>
        <name>ATP</name>
        <dbReference type="ChEBI" id="CHEBI:30616"/>
    </ligand>
</feature>
<feature type="binding site" evidence="1">
    <location>
        <position position="224"/>
    </location>
    <ligand>
        <name>substrate</name>
    </ligand>
</feature>
<dbReference type="EC" id="2.7.1.35" evidence="1"/>
<dbReference type="EMBL" id="CP000034">
    <property type="protein sequence ID" value="ABB61968.1"/>
    <property type="molecule type" value="Genomic_DNA"/>
</dbReference>
<dbReference type="RefSeq" id="YP_403459.1">
    <property type="nucleotide sequence ID" value="NC_007606.1"/>
</dbReference>
<dbReference type="SMR" id="Q32FD7"/>
<dbReference type="STRING" id="300267.SDY_1859"/>
<dbReference type="EnsemblBacteria" id="ABB61968">
    <property type="protein sequence ID" value="ABB61968"/>
    <property type="gene ID" value="SDY_1859"/>
</dbReference>
<dbReference type="KEGG" id="sdy:SDY_1859"/>
<dbReference type="PATRIC" id="fig|300267.13.peg.2238"/>
<dbReference type="HOGENOM" id="CLU_046496_3_0_6"/>
<dbReference type="UniPathway" id="UPA01068">
    <property type="reaction ID" value="UER00298"/>
</dbReference>
<dbReference type="Proteomes" id="UP000002716">
    <property type="component" value="Chromosome"/>
</dbReference>
<dbReference type="GO" id="GO:0005829">
    <property type="term" value="C:cytosol"/>
    <property type="evidence" value="ECO:0007669"/>
    <property type="project" value="TreeGrafter"/>
</dbReference>
<dbReference type="GO" id="GO:0005524">
    <property type="term" value="F:ATP binding"/>
    <property type="evidence" value="ECO:0007669"/>
    <property type="project" value="UniProtKB-UniRule"/>
</dbReference>
<dbReference type="GO" id="GO:0000287">
    <property type="term" value="F:magnesium ion binding"/>
    <property type="evidence" value="ECO:0007669"/>
    <property type="project" value="UniProtKB-UniRule"/>
</dbReference>
<dbReference type="GO" id="GO:0008478">
    <property type="term" value="F:pyridoxal kinase activity"/>
    <property type="evidence" value="ECO:0007669"/>
    <property type="project" value="UniProtKB-UniRule"/>
</dbReference>
<dbReference type="GO" id="GO:0009443">
    <property type="term" value="P:pyridoxal 5'-phosphate salvage"/>
    <property type="evidence" value="ECO:0007669"/>
    <property type="project" value="UniProtKB-UniRule"/>
</dbReference>
<dbReference type="CDD" id="cd01173">
    <property type="entry name" value="pyridoxal_pyridoxamine_kinase"/>
    <property type="match status" value="1"/>
</dbReference>
<dbReference type="FunFam" id="3.40.1190.20:FF:000008">
    <property type="entry name" value="Pyridoxal kinase PdxY"/>
    <property type="match status" value="1"/>
</dbReference>
<dbReference type="Gene3D" id="3.40.1190.20">
    <property type="match status" value="1"/>
</dbReference>
<dbReference type="HAMAP" id="MF_01639">
    <property type="entry name" value="PdxY"/>
    <property type="match status" value="1"/>
</dbReference>
<dbReference type="InterPro" id="IPR013749">
    <property type="entry name" value="PM/HMP-P_kinase-1"/>
</dbReference>
<dbReference type="InterPro" id="IPR004625">
    <property type="entry name" value="PyrdxlKinase"/>
</dbReference>
<dbReference type="InterPro" id="IPR023685">
    <property type="entry name" value="Pyridoxal_kinase_PdxY"/>
</dbReference>
<dbReference type="InterPro" id="IPR029056">
    <property type="entry name" value="Ribokinase-like"/>
</dbReference>
<dbReference type="NCBIfam" id="NF004398">
    <property type="entry name" value="PRK05756.1"/>
    <property type="match status" value="1"/>
</dbReference>
<dbReference type="NCBIfam" id="TIGR00687">
    <property type="entry name" value="pyridox_kin"/>
    <property type="match status" value="1"/>
</dbReference>
<dbReference type="PANTHER" id="PTHR10534">
    <property type="entry name" value="PYRIDOXAL KINASE"/>
    <property type="match status" value="1"/>
</dbReference>
<dbReference type="PANTHER" id="PTHR10534:SF2">
    <property type="entry name" value="PYRIDOXAL KINASE"/>
    <property type="match status" value="1"/>
</dbReference>
<dbReference type="Pfam" id="PF08543">
    <property type="entry name" value="Phos_pyr_kin"/>
    <property type="match status" value="1"/>
</dbReference>
<dbReference type="SUPFAM" id="SSF53613">
    <property type="entry name" value="Ribokinase-like"/>
    <property type="match status" value="1"/>
</dbReference>
<comment type="function">
    <text evidence="1">Pyridoxal kinase involved in the salvage pathway of pyridoxal 5'-phosphate (PLP). Catalyzes the phosphorylation of pyridoxal to PLP.</text>
</comment>
<comment type="catalytic activity">
    <reaction evidence="1">
        <text>pyridoxal + ATP = pyridoxal 5'-phosphate + ADP + H(+)</text>
        <dbReference type="Rhea" id="RHEA:10224"/>
        <dbReference type="ChEBI" id="CHEBI:15378"/>
        <dbReference type="ChEBI" id="CHEBI:17310"/>
        <dbReference type="ChEBI" id="CHEBI:30616"/>
        <dbReference type="ChEBI" id="CHEBI:456216"/>
        <dbReference type="ChEBI" id="CHEBI:597326"/>
        <dbReference type="EC" id="2.7.1.35"/>
    </reaction>
</comment>
<comment type="cofactor">
    <cofactor evidence="1">
        <name>Mg(2+)</name>
        <dbReference type="ChEBI" id="CHEBI:18420"/>
    </cofactor>
</comment>
<comment type="pathway">
    <text evidence="1">Cofactor metabolism; pyridoxal 5'-phosphate salvage; pyridoxal 5'-phosphate from pyridoxal: step 1/1.</text>
</comment>
<comment type="subunit">
    <text evidence="1">Homodimer.</text>
</comment>
<comment type="similarity">
    <text evidence="1">Belongs to the pyridoxine kinase family. PdxY subfamily.</text>
</comment>
<sequence length="287" mass="31348">MMKNILAIQSHVVYGHAGNSAVEFPMRRLGANVWPLNTVQFSNHTQYGKWTGCVMPPSHLTEIVQGIAAIDKLHTCDAVLSGYLGSAEQGEHILGIVRQVKAANPQAKYFCDPVMGHPEKGCIVAPGVAEFHVRHGLPASDIIAPNLVELEILCEHPVNNVEEAVLAARELIAQGPQIVLVKHLAQAGYSRDRFEMLLVTADEAWHISRPLVDFGMRQPVGVGDVTSGLLLVKLLQGATLQEALEHVTAAVYEIMVTTKAMQEYELQVVAAQDRIAKPEHYFSATKL</sequence>
<evidence type="ECO:0000255" key="1">
    <source>
        <dbReference type="HAMAP-Rule" id="MF_01639"/>
    </source>
</evidence>
<protein>
    <recommendedName>
        <fullName evidence="1">Pyridoxal kinase PdxY</fullName>
        <shortName evidence="1">PL kinase</shortName>
        <ecNumber evidence="1">2.7.1.35</ecNumber>
    </recommendedName>
</protein>
<accession>Q32FD7</accession>
<reference key="1">
    <citation type="journal article" date="2005" name="Nucleic Acids Res.">
        <title>Genome dynamics and diversity of Shigella species, the etiologic agents of bacillary dysentery.</title>
        <authorList>
            <person name="Yang F."/>
            <person name="Yang J."/>
            <person name="Zhang X."/>
            <person name="Chen L."/>
            <person name="Jiang Y."/>
            <person name="Yan Y."/>
            <person name="Tang X."/>
            <person name="Wang J."/>
            <person name="Xiong Z."/>
            <person name="Dong J."/>
            <person name="Xue Y."/>
            <person name="Zhu Y."/>
            <person name="Xu X."/>
            <person name="Sun L."/>
            <person name="Chen S."/>
            <person name="Nie H."/>
            <person name="Peng J."/>
            <person name="Xu J."/>
            <person name="Wang Y."/>
            <person name="Yuan Z."/>
            <person name="Wen Y."/>
            <person name="Yao Z."/>
            <person name="Shen Y."/>
            <person name="Qiang B."/>
            <person name="Hou Y."/>
            <person name="Yu J."/>
            <person name="Jin Q."/>
        </authorList>
    </citation>
    <scope>NUCLEOTIDE SEQUENCE [LARGE SCALE GENOMIC DNA]</scope>
    <source>
        <strain>Sd197</strain>
    </source>
</reference>
<gene>
    <name evidence="1" type="primary">pdxY</name>
    <name type="ordered locus">SDY_1859</name>
</gene>
<organism>
    <name type="scientific">Shigella dysenteriae serotype 1 (strain Sd197)</name>
    <dbReference type="NCBI Taxonomy" id="300267"/>
    <lineage>
        <taxon>Bacteria</taxon>
        <taxon>Pseudomonadati</taxon>
        <taxon>Pseudomonadota</taxon>
        <taxon>Gammaproteobacteria</taxon>
        <taxon>Enterobacterales</taxon>
        <taxon>Enterobacteriaceae</taxon>
        <taxon>Shigella</taxon>
    </lineage>
</organism>
<keyword id="KW-0067">ATP-binding</keyword>
<keyword id="KW-0418">Kinase</keyword>
<keyword id="KW-0460">Magnesium</keyword>
<keyword id="KW-0547">Nucleotide-binding</keyword>
<keyword id="KW-1185">Reference proteome</keyword>
<keyword id="KW-0808">Transferase</keyword>